<evidence type="ECO:0000255" key="1">
    <source>
        <dbReference type="HAMAP-Rule" id="MF_01083"/>
    </source>
</evidence>
<feature type="chain" id="PRO_1000136863" description="Glutarate 2-hydroxylase">
    <location>
        <begin position="1"/>
        <end position="325"/>
    </location>
</feature>
<feature type="binding site" evidence="1">
    <location>
        <position position="160"/>
    </location>
    <ligand>
        <name>Fe cation</name>
        <dbReference type="ChEBI" id="CHEBI:24875"/>
    </ligand>
</feature>
<feature type="binding site" evidence="1">
    <location>
        <position position="162"/>
    </location>
    <ligand>
        <name>Fe cation</name>
        <dbReference type="ChEBI" id="CHEBI:24875"/>
    </ligand>
</feature>
<feature type="binding site" evidence="1">
    <location>
        <position position="292"/>
    </location>
    <ligand>
        <name>Fe cation</name>
        <dbReference type="ChEBI" id="CHEBI:24875"/>
    </ligand>
</feature>
<name>GLAH_ECO45</name>
<gene>
    <name evidence="1" type="primary">glaH</name>
    <name type="ordered locus">ECS88_2923</name>
</gene>
<accession>B7MJS0</accession>
<organism>
    <name type="scientific">Escherichia coli O45:K1 (strain S88 / ExPEC)</name>
    <dbReference type="NCBI Taxonomy" id="585035"/>
    <lineage>
        <taxon>Bacteria</taxon>
        <taxon>Pseudomonadati</taxon>
        <taxon>Pseudomonadota</taxon>
        <taxon>Gammaproteobacteria</taxon>
        <taxon>Enterobacterales</taxon>
        <taxon>Enterobacteriaceae</taxon>
        <taxon>Escherichia</taxon>
    </lineage>
</organism>
<protein>
    <recommendedName>
        <fullName evidence="1">Glutarate 2-hydroxylase</fullName>
        <shortName evidence="1">G-2-H</shortName>
        <ecNumber evidence="1">1.14.11.64</ecNumber>
    </recommendedName>
</protein>
<dbReference type="EC" id="1.14.11.64" evidence="1"/>
<dbReference type="EMBL" id="CU928161">
    <property type="protein sequence ID" value="CAR04170.1"/>
    <property type="molecule type" value="Genomic_DNA"/>
</dbReference>
<dbReference type="RefSeq" id="WP_000993117.1">
    <property type="nucleotide sequence ID" value="NC_011742.1"/>
</dbReference>
<dbReference type="SMR" id="B7MJS0"/>
<dbReference type="KEGG" id="ecz:ECS88_2923"/>
<dbReference type="HOGENOM" id="CLU_075277_0_0_6"/>
<dbReference type="Proteomes" id="UP000000747">
    <property type="component" value="Chromosome"/>
</dbReference>
<dbReference type="GO" id="GO:0008198">
    <property type="term" value="F:ferrous iron binding"/>
    <property type="evidence" value="ECO:0007669"/>
    <property type="project" value="UniProtKB-UniRule"/>
</dbReference>
<dbReference type="GO" id="GO:0106343">
    <property type="term" value="F:glutarate dioxygenase activity"/>
    <property type="evidence" value="ECO:0007669"/>
    <property type="project" value="UniProtKB-EC"/>
</dbReference>
<dbReference type="GO" id="GO:0050498">
    <property type="term" value="F:oxidoreductase activity, acting on paired donors, with incorporation or reduction of molecular oxygen, with 2-oxoglutarate as one donor, and the other dehydrogenated"/>
    <property type="evidence" value="ECO:0007669"/>
    <property type="project" value="UniProtKB-UniRule"/>
</dbReference>
<dbReference type="GO" id="GO:0019477">
    <property type="term" value="P:L-lysine catabolic process"/>
    <property type="evidence" value="ECO:0007669"/>
    <property type="project" value="UniProtKB-UniRule"/>
</dbReference>
<dbReference type="CDD" id="cd00250">
    <property type="entry name" value="CAS_like"/>
    <property type="match status" value="1"/>
</dbReference>
<dbReference type="FunFam" id="3.60.130.10:FF:000004">
    <property type="entry name" value="Glutarate 2-hydroxylase"/>
    <property type="match status" value="1"/>
</dbReference>
<dbReference type="Gene3D" id="3.60.130.10">
    <property type="entry name" value="Clavaminate synthase-like"/>
    <property type="match status" value="1"/>
</dbReference>
<dbReference type="HAMAP" id="MF_01083">
    <property type="entry name" value="glutarate_hydroxylase"/>
    <property type="match status" value="1"/>
</dbReference>
<dbReference type="InterPro" id="IPR015038">
    <property type="entry name" value="GlaH"/>
</dbReference>
<dbReference type="InterPro" id="IPR042098">
    <property type="entry name" value="TauD-like_sf"/>
</dbReference>
<dbReference type="NCBIfam" id="NF002814">
    <property type="entry name" value="PRK02963.1"/>
    <property type="match status" value="1"/>
</dbReference>
<dbReference type="Pfam" id="PF08943">
    <property type="entry name" value="CsiD"/>
    <property type="match status" value="1"/>
</dbReference>
<dbReference type="SUPFAM" id="SSF51197">
    <property type="entry name" value="Clavaminate synthase-like"/>
    <property type="match status" value="1"/>
</dbReference>
<reference key="1">
    <citation type="journal article" date="2009" name="PLoS Genet.">
        <title>Organised genome dynamics in the Escherichia coli species results in highly diverse adaptive paths.</title>
        <authorList>
            <person name="Touchon M."/>
            <person name="Hoede C."/>
            <person name="Tenaillon O."/>
            <person name="Barbe V."/>
            <person name="Baeriswyl S."/>
            <person name="Bidet P."/>
            <person name="Bingen E."/>
            <person name="Bonacorsi S."/>
            <person name="Bouchier C."/>
            <person name="Bouvet O."/>
            <person name="Calteau A."/>
            <person name="Chiapello H."/>
            <person name="Clermont O."/>
            <person name="Cruveiller S."/>
            <person name="Danchin A."/>
            <person name="Diard M."/>
            <person name="Dossat C."/>
            <person name="Karoui M.E."/>
            <person name="Frapy E."/>
            <person name="Garry L."/>
            <person name="Ghigo J.M."/>
            <person name="Gilles A.M."/>
            <person name="Johnson J."/>
            <person name="Le Bouguenec C."/>
            <person name="Lescat M."/>
            <person name="Mangenot S."/>
            <person name="Martinez-Jehanne V."/>
            <person name="Matic I."/>
            <person name="Nassif X."/>
            <person name="Oztas S."/>
            <person name="Petit M.A."/>
            <person name="Pichon C."/>
            <person name="Rouy Z."/>
            <person name="Ruf C.S."/>
            <person name="Schneider D."/>
            <person name="Tourret J."/>
            <person name="Vacherie B."/>
            <person name="Vallenet D."/>
            <person name="Medigue C."/>
            <person name="Rocha E.P.C."/>
            <person name="Denamur E."/>
        </authorList>
    </citation>
    <scope>NUCLEOTIDE SEQUENCE [LARGE SCALE GENOMIC DNA]</scope>
    <source>
        <strain>S88 / ExPEC</strain>
    </source>
</reference>
<keyword id="KW-0223">Dioxygenase</keyword>
<keyword id="KW-0408">Iron</keyword>
<keyword id="KW-0479">Metal-binding</keyword>
<keyword id="KW-0560">Oxidoreductase</keyword>
<keyword id="KW-1185">Reference proteome</keyword>
<sequence>MNALTAVQNNAVDSGQDYSGFTLIPSAQSPRLLELTFTEQTTNRFLEQVAEWPVQALEYKSFLRFRVGKILDDLCANQLQPLLLKTLLNRAEGALLINAVGIDDVAQADEMVKLATAVAHLIGRSNFDAMSGQYYARFVVKNVDNSDSYLRQPHRVMELHNDGTYVEEITDYVLMMKIDEQNMQGGNSLLLHLDDWEHLDHFFRHPLARRPMRFAAPPSKNVSKDVFHPVFDVDQQGRPVMRYIDQFVQPKDFEEGVWLSELSDAIETSKGILSVPVPVGKFLLINNLFWLHGRDRFTPHPDLRRELMRQRGYFAYATHHYQTHQ</sequence>
<comment type="function">
    <text evidence="1">Acts as an alpha-ketoglutarate-dependent dioxygenase catalyzing hydroxylation of glutarate (GA) to L-2-hydroxyglutarate (L2HG). Functions in a L-lysine degradation pathway that proceeds via cadaverine, glutarate and L-2-hydroxyglutarate.</text>
</comment>
<comment type="catalytic activity">
    <reaction evidence="1">
        <text>glutarate + 2-oxoglutarate + O2 = (S)-2-hydroxyglutarate + succinate + CO2</text>
        <dbReference type="Rhea" id="RHEA:13821"/>
        <dbReference type="ChEBI" id="CHEBI:15379"/>
        <dbReference type="ChEBI" id="CHEBI:16526"/>
        <dbReference type="ChEBI" id="CHEBI:16782"/>
        <dbReference type="ChEBI" id="CHEBI:16810"/>
        <dbReference type="ChEBI" id="CHEBI:30031"/>
        <dbReference type="ChEBI" id="CHEBI:30921"/>
        <dbReference type="EC" id="1.14.11.64"/>
    </reaction>
    <physiologicalReaction direction="left-to-right" evidence="1">
        <dbReference type="Rhea" id="RHEA:13822"/>
    </physiologicalReaction>
</comment>
<comment type="cofactor">
    <cofactor evidence="1">
        <name>Fe(2+)</name>
        <dbReference type="ChEBI" id="CHEBI:29033"/>
    </cofactor>
    <text evidence="1">Binds 1 Fe(2+) ion per subunit.</text>
</comment>
<comment type="pathway">
    <text evidence="1">Amino-acid degradation.</text>
</comment>
<comment type="subunit">
    <text evidence="1">Homotetramer.</text>
</comment>
<comment type="similarity">
    <text evidence="1">Belongs to the glutarate hydroxylase family.</text>
</comment>
<proteinExistence type="inferred from homology"/>